<keyword id="KW-1003">Cell membrane</keyword>
<keyword id="KW-0966">Cell projection</keyword>
<keyword id="KW-0969">Cilium</keyword>
<keyword id="KW-0282">Flagellum</keyword>
<keyword id="KW-0449">Lipoprotein</keyword>
<keyword id="KW-0472">Membrane</keyword>
<keyword id="KW-0519">Myristate</keyword>
<keyword id="KW-0564">Palmitate</keyword>
<keyword id="KW-0964">Secreted</keyword>
<evidence type="ECO:0000255" key="1"/>
<evidence type="ECO:0000269" key="2">
    <source>
    </source>
</evidence>
<evidence type="ECO:0000303" key="3">
    <source>
    </source>
</evidence>
<evidence type="ECO:0000305" key="4"/>
<evidence type="ECO:0000312" key="5">
    <source>
        <dbReference type="EMBL" id="CAD24805.1"/>
    </source>
</evidence>
<comment type="function">
    <text evidence="2">Inactive metacaspase which plays a role in parasite bloodstream form growth and in parasite virulence within the mammalian host.</text>
</comment>
<comment type="subcellular location">
    <subcellularLocation>
        <location evidence="2">Cell projection</location>
        <location evidence="2">Cilium</location>
        <location evidence="2">Flagellum membrane</location>
        <topology evidence="2">Lipid-anchor</topology>
        <orientation evidence="2">Cytoplasmic side</orientation>
    </subcellularLocation>
    <subcellularLocation>
        <location evidence="2">Secreted</location>
    </subcellularLocation>
    <text evidence="2">Secreted by the parasite bloodstream form (PubMed:21949125). Membrane localization is required for MCA4 processing but is dispensable for MCA4 secretion, and parasite growth and virulence in the mammalian host (PubMed:21949125).</text>
</comment>
<comment type="developmental stage">
    <text evidence="2">Specifically expressed in the bloodstream form (at protein level).</text>
</comment>
<comment type="PTM">
    <text evidence="2">Palmitoylated.</text>
</comment>
<comment type="PTM">
    <text evidence="2">Proteolytic cleavage by MCA3 occurs prior or during secretion and requires MCA4 membrane localization (PubMed:21949125). Cleavage is dispensable for secretion and parasite growth and virulence in the mammalian host (PubMed:21949125). In vitro, can be cleaved by MCA2 but specifically cleaved by MCA3 in vivo (PubMed:21949125).</text>
</comment>
<comment type="disruption phenotype">
    <text evidence="2">Knockouts in the bloodstream form have an initial slower growth rate in vitro which reaches wild-type levels after several weeks of culture (PubMed:21949125). Knockouts in the bloodstream form have a reduced growth rate and virulence in infected mice (PubMed:21949125). RNAi-mediated knockdown at the bloodstream stage results in a more severe phenotype characterized by a growth arrest due to a failure to undergo cytokinesis (PubMed:21949125).</text>
</comment>
<comment type="similarity">
    <text evidence="4">Belongs to the peptidase C14B family.</text>
</comment>
<comment type="caution">
    <text evidence="2">In contrast to other metacaspases (MCA) of the peptidase C14B family, contains a serine residue at the position of the canonical catalytic cysteine and has been shown to lack protease activity.</text>
</comment>
<gene>
    <name evidence="3" type="primary">MCA4</name>
</gene>
<name>MCA4_TRYBB</name>
<reference evidence="5" key="1">
    <citation type="journal article" date="2002" name="FEBS Lett.">
        <title>A metacaspase of Trypanosoma brucei causes loss of respiration competence and clonal death in the yeast Saccharomyces cerevisiae.</title>
        <authorList>
            <person name="Szallies A."/>
            <person name="Kubata B.K."/>
            <person name="Duszenko M."/>
        </authorList>
    </citation>
    <scope>NUCLEOTIDE SEQUENCE [MRNA]</scope>
</reference>
<reference evidence="4" key="2">
    <citation type="journal article" date="2011" name="J. Biol. Chem.">
        <title>Trypanosoma brucei metacaspase 4 is a pseudopeptidase and a virulence factor.</title>
        <authorList>
            <person name="Proto W.R."/>
            <person name="Castanys-Munoz E."/>
            <person name="Black A."/>
            <person name="Tetley L."/>
            <person name="Moss C.X."/>
            <person name="Juliano L."/>
            <person name="Coombs G.H."/>
            <person name="Mottram J.C."/>
        </authorList>
    </citation>
    <scope>FUNCTION</scope>
    <scope>LACK OF CATALYTIC ACTIVITY</scope>
    <scope>SUBCELLULAR LOCATION</scope>
    <scope>DEVELOPMENTAL STAGE</scope>
    <scope>PROTEOLYTIC CLEAVAGE</scope>
    <scope>PALMITOYLATION</scope>
    <scope>DISRUPTION PHENOTYPE</scope>
    <scope>MUTAGENESIS OF GLY-2 AND SER-219</scope>
</reference>
<proteinExistence type="evidence at protein level"/>
<protein>
    <recommendedName>
        <fullName evidence="4">Inactive metacaspase-4</fullName>
    </recommendedName>
    <alternativeName>
        <fullName evidence="3">TbMCA4</fullName>
    </alternativeName>
</protein>
<accession>Q8T8E5</accession>
<sequence>MGGCVSTALKVGAETVAEGHIDLISFAINYFKNAVPYIVKYLGRQQRPKEVDMEATLTEAKESKGFQPWKISCQPKGAVRGLFIGVNYGNTEAQLSGCCHDIMMMIGALQKRNFPLTEVVILADEEDVPGRTGEPTRANILRYLAWLAQDAQPNDVLFFHYSGHGTRANARDDDCEEYDQCIVPMDYVENGCIVDNEIHEILVSQLPKGVRLTAVFDCSHSGSMLDLPYAYVCDSSKDGSGSCGMKRVREDNDVQADVLMISACADDEAALGVDNTQDFYESGKDSGGAATFCLTAMMMREEPLTFLDLLVHTREMLKSRGFTQVPHLSASKPINLMQRFSLEGLFPQERTLL</sequence>
<organism>
    <name type="scientific">Trypanosoma brucei brucei</name>
    <dbReference type="NCBI Taxonomy" id="5702"/>
    <lineage>
        <taxon>Eukaryota</taxon>
        <taxon>Discoba</taxon>
        <taxon>Euglenozoa</taxon>
        <taxon>Kinetoplastea</taxon>
        <taxon>Metakinetoplastina</taxon>
        <taxon>Trypanosomatida</taxon>
        <taxon>Trypanosomatidae</taxon>
        <taxon>Trypanosoma</taxon>
    </lineage>
</organism>
<dbReference type="EMBL" id="AJ437304">
    <property type="protein sequence ID" value="CAD24805.1"/>
    <property type="molecule type" value="mRNA"/>
</dbReference>
<dbReference type="SMR" id="Q8T8E5"/>
<dbReference type="MEROPS" id="C14.044"/>
<dbReference type="GO" id="GO:0060170">
    <property type="term" value="C:ciliary membrane"/>
    <property type="evidence" value="ECO:0000314"/>
    <property type="project" value="GeneDB"/>
</dbReference>
<dbReference type="GO" id="GO:0005737">
    <property type="term" value="C:cytoplasm"/>
    <property type="evidence" value="ECO:0000314"/>
    <property type="project" value="GeneDB"/>
</dbReference>
<dbReference type="GO" id="GO:1903561">
    <property type="term" value="C:extracellular vesicle"/>
    <property type="evidence" value="ECO:0000314"/>
    <property type="project" value="GeneDB"/>
</dbReference>
<dbReference type="GO" id="GO:0031514">
    <property type="term" value="C:motile cilium"/>
    <property type="evidence" value="ECO:0007669"/>
    <property type="project" value="UniProtKB-KW"/>
</dbReference>
<dbReference type="GO" id="GO:0005634">
    <property type="term" value="C:nucleus"/>
    <property type="evidence" value="ECO:0000314"/>
    <property type="project" value="GeneDB"/>
</dbReference>
<dbReference type="GO" id="GO:0008233">
    <property type="term" value="F:peptidase activity"/>
    <property type="evidence" value="ECO:0000316"/>
    <property type="project" value="GeneDB"/>
</dbReference>
<dbReference type="GO" id="GO:0006508">
    <property type="term" value="P:proteolysis"/>
    <property type="evidence" value="ECO:0000255"/>
    <property type="project" value="GeneDB"/>
</dbReference>
<dbReference type="FunFam" id="3.40.50.12660:FF:000003">
    <property type="entry name" value="Metacaspase MCA2"/>
    <property type="match status" value="1"/>
</dbReference>
<dbReference type="Gene3D" id="3.40.50.12660">
    <property type="match status" value="1"/>
</dbReference>
<dbReference type="InterPro" id="IPR029030">
    <property type="entry name" value="Caspase-like_dom_sf"/>
</dbReference>
<dbReference type="InterPro" id="IPR050452">
    <property type="entry name" value="Metacaspase"/>
</dbReference>
<dbReference type="InterPro" id="IPR011600">
    <property type="entry name" value="Pept_C14_caspase"/>
</dbReference>
<dbReference type="PANTHER" id="PTHR48104:SF30">
    <property type="entry name" value="METACASPASE-1"/>
    <property type="match status" value="1"/>
</dbReference>
<dbReference type="PANTHER" id="PTHR48104">
    <property type="entry name" value="METACASPASE-4"/>
    <property type="match status" value="1"/>
</dbReference>
<dbReference type="Pfam" id="PF00656">
    <property type="entry name" value="Peptidase_C14"/>
    <property type="match status" value="1"/>
</dbReference>
<dbReference type="SUPFAM" id="SSF52129">
    <property type="entry name" value="Caspase-like"/>
    <property type="match status" value="1"/>
</dbReference>
<feature type="initiator methionine" description="Removed" evidence="1">
    <location>
        <position position="1"/>
    </location>
</feature>
<feature type="chain" id="PRO_0000451286" description="Inactive metacaspase-4">
    <location>
        <begin position="2"/>
        <end position="353"/>
    </location>
</feature>
<feature type="site" description="Cleavage; by MCA3" evidence="2">
    <location>
        <begin position="64"/>
        <end position="65"/>
    </location>
</feature>
<feature type="lipid moiety-binding region" description="N-myristoyl glycine" evidence="1">
    <location>
        <position position="2"/>
    </location>
</feature>
<feature type="mutagenesis site" description="Loss of flagellum membrane localization. No defect in MCA4 secretion, however processing of the secreted form is impaired. No defect in growth rate and virulence in infected mice." evidence="2">
    <original>G</original>
    <variation>A</variation>
    <location>
        <position position="2"/>
    </location>
</feature>
<feature type="mutagenesis site" description="Restores calcium-dependent auto-processing activity and catalytic activity towards substrates." evidence="2">
    <original>S</original>
    <variation>C</variation>
    <location>
        <position position="219"/>
    </location>
</feature>